<name>YDFG_ECOL6</name>
<feature type="chain" id="PRO_0000054826" description="NADP-dependent 3-hydroxy acid dehydrogenase YdfG">
    <location>
        <begin position="1"/>
        <end position="248"/>
    </location>
</feature>
<feature type="active site" description="Proton acceptor" evidence="4">
    <location>
        <position position="147"/>
    </location>
</feature>
<feature type="binding site" evidence="3">
    <location>
        <begin position="7"/>
        <end position="12"/>
    </location>
    <ligand>
        <name>NADP(+)</name>
        <dbReference type="ChEBI" id="CHEBI:58349"/>
    </ligand>
</feature>
<feature type="binding site" evidence="3">
    <location>
        <begin position="32"/>
        <end position="33"/>
    </location>
    <ligand>
        <name>NADP(+)</name>
        <dbReference type="ChEBI" id="CHEBI:58349"/>
    </ligand>
</feature>
<feature type="binding site" evidence="3">
    <location>
        <begin position="54"/>
        <end position="55"/>
    </location>
    <ligand>
        <name>NADP(+)</name>
        <dbReference type="ChEBI" id="CHEBI:58349"/>
    </ligand>
</feature>
<feature type="binding site" evidence="3">
    <location>
        <position position="81"/>
    </location>
    <ligand>
        <name>NADP(+)</name>
        <dbReference type="ChEBI" id="CHEBI:58349"/>
    </ligand>
</feature>
<feature type="binding site" evidence="1">
    <location>
        <position position="134"/>
    </location>
    <ligand>
        <name>substrate</name>
    </ligand>
</feature>
<feature type="binding site" evidence="3">
    <location>
        <position position="147"/>
    </location>
    <ligand>
        <name>NADP(+)</name>
        <dbReference type="ChEBI" id="CHEBI:58349"/>
    </ligand>
</feature>
<feature type="binding site" evidence="3">
    <location>
        <position position="151"/>
    </location>
    <ligand>
        <name>NADP(+)</name>
        <dbReference type="ChEBI" id="CHEBI:58349"/>
    </ligand>
</feature>
<feature type="binding site" evidence="3">
    <location>
        <begin position="177"/>
        <end position="185"/>
    </location>
    <ligand>
        <name>NADP(+)</name>
        <dbReference type="ChEBI" id="CHEBI:58349"/>
    </ligand>
</feature>
<comment type="function">
    <text evidence="2">NADP-dependent dehydrogenase with broad substrate specificity acting on 3-hydroxy acids. Catalyzes the NADP-dependent oxidation of L-allo-threonine to L-2-amino-3-keto-butyrate, which is spontaneously decarboxylated into aminoacetone. Also acts on D-threonine, L-serine, D-serine, D-3-hydroxyisobutyrate, L-3-hydroxyisobutyrate, D-glycerate and L-glycerate. Able to catalyze the reduction of the malonic semialdehyde to 3-hydroxypropionic acid. YdfG is apparently supplementing RutE, the presumed malonic semialdehyde reductase involved in pyrimidine degradation since both are able to detoxify malonic semialdehyde.</text>
</comment>
<comment type="catalytic activity">
    <reaction evidence="2">
        <text>3-hydroxypropanoate + NADP(+) = 3-oxopropanoate + NADPH + H(+)</text>
        <dbReference type="Rhea" id="RHEA:26438"/>
        <dbReference type="ChEBI" id="CHEBI:15378"/>
        <dbReference type="ChEBI" id="CHEBI:16510"/>
        <dbReference type="ChEBI" id="CHEBI:33190"/>
        <dbReference type="ChEBI" id="CHEBI:57783"/>
        <dbReference type="ChEBI" id="CHEBI:58349"/>
        <dbReference type="EC" id="1.1.1.298"/>
    </reaction>
</comment>
<comment type="catalytic activity">
    <reaction evidence="2">
        <text>L-allo-threonine + NADP(+) = aminoacetone + CO2 + NADPH</text>
        <dbReference type="Rhea" id="RHEA:43524"/>
        <dbReference type="ChEBI" id="CHEBI:16526"/>
        <dbReference type="ChEBI" id="CHEBI:57783"/>
        <dbReference type="ChEBI" id="CHEBI:58320"/>
        <dbReference type="ChEBI" id="CHEBI:58349"/>
        <dbReference type="ChEBI" id="CHEBI:58585"/>
        <dbReference type="EC" id="1.1.1.381"/>
    </reaction>
</comment>
<comment type="subunit">
    <text evidence="2">Homotetramer.</text>
</comment>
<comment type="similarity">
    <text evidence="5">Belongs to the short-chain dehydrogenases/reductases (SDR) family.</text>
</comment>
<comment type="sequence caution" evidence="5">
    <conflict type="erroneous initiation">
        <sequence resource="EMBL-CDS" id="AAN80422"/>
    </conflict>
</comment>
<reference key="1">
    <citation type="journal article" date="2002" name="Proc. Natl. Acad. Sci. U.S.A.">
        <title>Extensive mosaic structure revealed by the complete genome sequence of uropathogenic Escherichia coli.</title>
        <authorList>
            <person name="Welch R.A."/>
            <person name="Burland V."/>
            <person name="Plunkett G. III"/>
            <person name="Redford P."/>
            <person name="Roesch P."/>
            <person name="Rasko D."/>
            <person name="Buckles E.L."/>
            <person name="Liou S.-R."/>
            <person name="Boutin A."/>
            <person name="Hackett J."/>
            <person name="Stroud D."/>
            <person name="Mayhew G.F."/>
            <person name="Rose D.J."/>
            <person name="Zhou S."/>
            <person name="Schwartz D.C."/>
            <person name="Perna N.T."/>
            <person name="Mobley H.L.T."/>
            <person name="Donnenberg M.S."/>
            <person name="Blattner F.R."/>
        </authorList>
    </citation>
    <scope>NUCLEOTIDE SEQUENCE [LARGE SCALE GENOMIC DNA]</scope>
    <source>
        <strain>CFT073 / ATCC 700928 / UPEC</strain>
    </source>
</reference>
<proteinExistence type="inferred from homology"/>
<keyword id="KW-0521">NADP</keyword>
<keyword id="KW-0560">Oxidoreductase</keyword>
<keyword id="KW-1185">Reference proteome</keyword>
<gene>
    <name evidence="2" type="primary">ydfG</name>
    <name type="ordered locus">c1965</name>
</gene>
<evidence type="ECO:0000250" key="1"/>
<evidence type="ECO:0000250" key="2">
    <source>
        <dbReference type="UniProtKB" id="P39831"/>
    </source>
</evidence>
<evidence type="ECO:0000250" key="3">
    <source>
        <dbReference type="UniProtKB" id="Q05016"/>
    </source>
</evidence>
<evidence type="ECO:0000255" key="4">
    <source>
        <dbReference type="PROSITE-ProRule" id="PRU10001"/>
    </source>
</evidence>
<evidence type="ECO:0000305" key="5"/>
<sequence>MIVLVTGATAGFGECITRRFIQQGHKVIATGRRQERLQELKDELGDNLYIAQLDVRNRAAIEEMLASLPAEWSNIDILVNNAGLALGMEPAHKASIEDWETMIDTNNKGLVYMTRAVLPGMVERNHGHIINIGSTAGSWPYAGGNVYGATKAFVRQFSLNLRTDLHGTAVRVTDIEPGLVGGTEFSNVRFKGDDGKAEKTYQNTVALTPEDVSEAVWWVSTLPAHVNINTLEMMPVTQSYAGLNVHRQ</sequence>
<accession>Q8FHD2</accession>
<protein>
    <recommendedName>
        <fullName evidence="2">NADP-dependent 3-hydroxy acid dehydrogenase YdfG</fullName>
    </recommendedName>
    <alternativeName>
        <fullName evidence="2">L-allo-threonine dehydrogenase</fullName>
        <ecNumber evidence="2">1.1.1.381</ecNumber>
    </alternativeName>
    <alternativeName>
        <fullName evidence="2">Malonic semialdehyde reductase</fullName>
        <ecNumber evidence="2">1.1.1.298</ecNumber>
    </alternativeName>
</protein>
<dbReference type="EC" id="1.1.1.381" evidence="2"/>
<dbReference type="EC" id="1.1.1.298" evidence="2"/>
<dbReference type="EMBL" id="AE014075">
    <property type="protein sequence ID" value="AAN80422.1"/>
    <property type="status" value="ALT_INIT"/>
    <property type="molecule type" value="Genomic_DNA"/>
</dbReference>
<dbReference type="RefSeq" id="WP_001296081.1">
    <property type="nucleotide sequence ID" value="NZ_CP051263.1"/>
</dbReference>
<dbReference type="SMR" id="Q8FHD2"/>
<dbReference type="STRING" id="199310.c1965"/>
<dbReference type="KEGG" id="ecc:c1965"/>
<dbReference type="eggNOG" id="COG4221">
    <property type="taxonomic scope" value="Bacteria"/>
</dbReference>
<dbReference type="HOGENOM" id="CLU_010194_2_10_6"/>
<dbReference type="Proteomes" id="UP000001410">
    <property type="component" value="Chromosome"/>
</dbReference>
<dbReference type="GO" id="GO:0005829">
    <property type="term" value="C:cytosol"/>
    <property type="evidence" value="ECO:0007669"/>
    <property type="project" value="TreeGrafter"/>
</dbReference>
<dbReference type="GO" id="GO:0035527">
    <property type="term" value="F:3-hydroxypropionate dehydrogenase (NADP+) activity"/>
    <property type="evidence" value="ECO:0007669"/>
    <property type="project" value="UniProtKB-EC"/>
</dbReference>
<dbReference type="CDD" id="cd05346">
    <property type="entry name" value="SDR_c5"/>
    <property type="match status" value="1"/>
</dbReference>
<dbReference type="FunFam" id="3.40.50.720:FF:000047">
    <property type="entry name" value="NADP-dependent L-serine/L-allo-threonine dehydrogenase"/>
    <property type="match status" value="1"/>
</dbReference>
<dbReference type="Gene3D" id="3.40.50.720">
    <property type="entry name" value="NAD(P)-binding Rossmann-like Domain"/>
    <property type="match status" value="1"/>
</dbReference>
<dbReference type="InterPro" id="IPR036291">
    <property type="entry name" value="NAD(P)-bd_dom_sf"/>
</dbReference>
<dbReference type="InterPro" id="IPR020904">
    <property type="entry name" value="Sc_DH/Rdtase_CS"/>
</dbReference>
<dbReference type="InterPro" id="IPR002347">
    <property type="entry name" value="SDR_fam"/>
</dbReference>
<dbReference type="NCBIfam" id="NF007829">
    <property type="entry name" value="PRK10538.1"/>
    <property type="match status" value="1"/>
</dbReference>
<dbReference type="PANTHER" id="PTHR43086:SF3">
    <property type="entry name" value="NADP-DEPENDENT 3-HYDROXY ACID DEHYDROGENASE YDFG"/>
    <property type="match status" value="1"/>
</dbReference>
<dbReference type="PANTHER" id="PTHR43086">
    <property type="entry name" value="VERY-LONG-CHAIN 3-OXOOACYL-COA REDUCTASE"/>
    <property type="match status" value="1"/>
</dbReference>
<dbReference type="Pfam" id="PF00106">
    <property type="entry name" value="adh_short"/>
    <property type="match status" value="1"/>
</dbReference>
<dbReference type="PRINTS" id="PR00081">
    <property type="entry name" value="GDHRDH"/>
</dbReference>
<dbReference type="PRINTS" id="PR00080">
    <property type="entry name" value="SDRFAMILY"/>
</dbReference>
<dbReference type="SUPFAM" id="SSF51735">
    <property type="entry name" value="NAD(P)-binding Rossmann-fold domains"/>
    <property type="match status" value="1"/>
</dbReference>
<dbReference type="PROSITE" id="PS00061">
    <property type="entry name" value="ADH_SHORT"/>
    <property type="match status" value="1"/>
</dbReference>
<organism>
    <name type="scientific">Escherichia coli O6:H1 (strain CFT073 / ATCC 700928 / UPEC)</name>
    <dbReference type="NCBI Taxonomy" id="199310"/>
    <lineage>
        <taxon>Bacteria</taxon>
        <taxon>Pseudomonadati</taxon>
        <taxon>Pseudomonadota</taxon>
        <taxon>Gammaproteobacteria</taxon>
        <taxon>Enterobacterales</taxon>
        <taxon>Enterobacteriaceae</taxon>
        <taxon>Escherichia</taxon>
    </lineage>
</organism>